<comment type="similarity">
    <text evidence="1">Belongs to the UPF0346 family.</text>
</comment>
<dbReference type="EMBL" id="AM295007">
    <property type="protein sequence ID" value="CAM30806.1"/>
    <property type="molecule type" value="Genomic_DNA"/>
</dbReference>
<dbReference type="RefSeq" id="WP_002985757.1">
    <property type="nucleotide sequence ID" value="NC_009332.1"/>
</dbReference>
<dbReference type="SMR" id="A2RG27"/>
<dbReference type="KEGG" id="spf:SpyM51485"/>
<dbReference type="HOGENOM" id="CLU_177534_1_0_9"/>
<dbReference type="Gene3D" id="1.10.150.260">
    <property type="entry name" value="YozE SAM-like"/>
    <property type="match status" value="1"/>
</dbReference>
<dbReference type="HAMAP" id="MF_01538">
    <property type="entry name" value="UPF0346"/>
    <property type="match status" value="1"/>
</dbReference>
<dbReference type="InterPro" id="IPR010673">
    <property type="entry name" value="UPF0346"/>
</dbReference>
<dbReference type="InterPro" id="IPR023089">
    <property type="entry name" value="YozE_SAM-like"/>
</dbReference>
<dbReference type="InterPro" id="IPR036806">
    <property type="entry name" value="YozE_SAM-like_sf"/>
</dbReference>
<dbReference type="NCBIfam" id="NF010193">
    <property type="entry name" value="PRK13672.1"/>
    <property type="match status" value="1"/>
</dbReference>
<dbReference type="Pfam" id="PF06855">
    <property type="entry name" value="YozE_SAM_like"/>
    <property type="match status" value="1"/>
</dbReference>
<dbReference type="PIRSF" id="PIRSF037262">
    <property type="entry name" value="UCP037262"/>
    <property type="match status" value="1"/>
</dbReference>
<dbReference type="SUPFAM" id="SSF140652">
    <property type="entry name" value="YozE-like"/>
    <property type="match status" value="1"/>
</dbReference>
<organism>
    <name type="scientific">Streptococcus pyogenes serotype M5 (strain Manfredo)</name>
    <dbReference type="NCBI Taxonomy" id="160491"/>
    <lineage>
        <taxon>Bacteria</taxon>
        <taxon>Bacillati</taxon>
        <taxon>Bacillota</taxon>
        <taxon>Bacilli</taxon>
        <taxon>Lactobacillales</taxon>
        <taxon>Streptococcaceae</taxon>
        <taxon>Streptococcus</taxon>
    </lineage>
</organism>
<feature type="chain" id="PRO_0000298758" description="UPF0346 protein SpyM51485">
    <location>
        <begin position="1"/>
        <end position="71"/>
    </location>
</feature>
<gene>
    <name type="ordered locus">SpyM51485</name>
</gene>
<proteinExistence type="inferred from homology"/>
<accession>A2RG27</accession>
<evidence type="ECO:0000255" key="1">
    <source>
        <dbReference type="HAMAP-Rule" id="MF_01538"/>
    </source>
</evidence>
<name>Y1485_STRPG</name>
<reference key="1">
    <citation type="journal article" date="2007" name="J. Bacteriol.">
        <title>Complete genome of acute rheumatic fever-associated serotype M5 Streptococcus pyogenes strain Manfredo.</title>
        <authorList>
            <person name="Holden M.T.G."/>
            <person name="Scott A."/>
            <person name="Cherevach I."/>
            <person name="Chillingworth T."/>
            <person name="Churcher C."/>
            <person name="Cronin A."/>
            <person name="Dowd L."/>
            <person name="Feltwell T."/>
            <person name="Hamlin N."/>
            <person name="Holroyd S."/>
            <person name="Jagels K."/>
            <person name="Moule S."/>
            <person name="Mungall K."/>
            <person name="Quail M.A."/>
            <person name="Price C."/>
            <person name="Rabbinowitsch E."/>
            <person name="Sharp S."/>
            <person name="Skelton J."/>
            <person name="Whitehead S."/>
            <person name="Barrell B.G."/>
            <person name="Kehoe M."/>
            <person name="Parkhill J."/>
        </authorList>
    </citation>
    <scope>NUCLEOTIDE SEQUENCE [LARGE SCALE GENOMIC DNA]</scope>
    <source>
        <strain>Manfredo</strain>
    </source>
</reference>
<sequence length="71" mass="8481">MRKSFYSWLMTQRNPKSNEPVAILADLVFDDTTFPKHTNDFELISRYLEDQASFSFNLGQFDEIWEDYLAH</sequence>
<protein>
    <recommendedName>
        <fullName evidence="1">UPF0346 protein SpyM51485</fullName>
    </recommendedName>
</protein>